<name>YORF3_NORAV</name>
<dbReference type="EMBL" id="DQ321720">
    <property type="protein sequence ID" value="ABC55269.1"/>
    <property type="molecule type" value="Genomic_RNA"/>
</dbReference>
<dbReference type="SMR" id="Q27YG8"/>
<dbReference type="Gene3D" id="1.10.287.1490">
    <property type="match status" value="1"/>
</dbReference>
<organismHost>
    <name type="scientific">Drosophila melanogaster</name>
    <name type="common">Fruit fly</name>
    <dbReference type="NCBI Taxonomy" id="7227"/>
</organismHost>
<protein>
    <recommendedName>
        <fullName>Uncharacterized ORF3 protein</fullName>
    </recommendedName>
</protein>
<sequence length="289" mass="31993">MALKEEIFDQNTTLFAVLDENEVTEIKSIQSSVTAVKTQLDQQKLQLDGLAKVVDNNQARNEEQFVNINTTLVEMSSEVDKLTITTSQQAKQINTLATTLNELDQTTKDSLDTLNTTTESLKKQVLFNTDEITVLKVDVATVTQKQQDVEHSLVTMKDEIGELHVSVNANANSIEALRTRIAALEIRDVGPWVLKDRIYKFVINKPNGTTRYTTIYFFADVYYSTGVRAAPTNSGTATSILTITSLTTSYSLANVPVLKGVPYRVNGYFANGNNIEDITGSTSVIYDSM</sequence>
<organism>
    <name type="scientific">Nora virus</name>
    <dbReference type="NCBI Taxonomy" id="3071212"/>
    <lineage>
        <taxon>Viruses</taxon>
        <taxon>Riboviria</taxon>
        <taxon>Orthornavirae</taxon>
        <taxon>Pisuviricota</taxon>
        <taxon>Pisoniviricetes</taxon>
        <taxon>Picornavirales</taxon>
        <taxon>Noraviridae</taxon>
        <taxon>Orthonoravirus</taxon>
        <taxon>Orthonoravirus melanogastri</taxon>
    </lineage>
</organism>
<accession>Q27YG8</accession>
<gene>
    <name type="ORF">ORF3</name>
</gene>
<feature type="chain" id="PRO_0000283696" description="Uncharacterized ORF3 protein">
    <location>
        <begin position="1"/>
        <end position="289"/>
    </location>
</feature>
<proteinExistence type="predicted"/>
<reference key="1">
    <citation type="journal article" date="2006" name="J. Gen. Virol.">
        <title>Nora virus, a persistent virus in Drosophila, defines a new picorna-like virus family.</title>
        <authorList>
            <person name="Habayeb M.S."/>
            <person name="Ekengren S.K."/>
            <person name="Hultmark D."/>
        </authorList>
    </citation>
    <scope>NUCLEOTIDE SEQUENCE [GENOMIC RNA]</scope>
</reference>